<feature type="chain" id="PRO_1000009868" description="Uracil-DNA glycosylase">
    <location>
        <begin position="1"/>
        <end position="252"/>
    </location>
</feature>
<feature type="active site" description="Proton acceptor" evidence="1">
    <location>
        <position position="78"/>
    </location>
</feature>
<dbReference type="EC" id="3.2.2.27" evidence="1"/>
<dbReference type="EMBL" id="AM167904">
    <property type="protein sequence ID" value="CAJ47778.1"/>
    <property type="molecule type" value="Genomic_DNA"/>
</dbReference>
<dbReference type="RefSeq" id="WP_012415876.1">
    <property type="nucleotide sequence ID" value="NC_010645.1"/>
</dbReference>
<dbReference type="SMR" id="Q2L0Y2"/>
<dbReference type="STRING" id="360910.BAV0172"/>
<dbReference type="GeneID" id="92936581"/>
<dbReference type="KEGG" id="bav:BAV0172"/>
<dbReference type="eggNOG" id="COG0692">
    <property type="taxonomic scope" value="Bacteria"/>
</dbReference>
<dbReference type="HOGENOM" id="CLU_032162_3_0_4"/>
<dbReference type="OrthoDB" id="9804372at2"/>
<dbReference type="Proteomes" id="UP000001977">
    <property type="component" value="Chromosome"/>
</dbReference>
<dbReference type="GO" id="GO:0005737">
    <property type="term" value="C:cytoplasm"/>
    <property type="evidence" value="ECO:0007669"/>
    <property type="project" value="UniProtKB-SubCell"/>
</dbReference>
<dbReference type="GO" id="GO:0004844">
    <property type="term" value="F:uracil DNA N-glycosylase activity"/>
    <property type="evidence" value="ECO:0007669"/>
    <property type="project" value="UniProtKB-UniRule"/>
</dbReference>
<dbReference type="GO" id="GO:0097510">
    <property type="term" value="P:base-excision repair, AP site formation via deaminated base removal"/>
    <property type="evidence" value="ECO:0007669"/>
    <property type="project" value="TreeGrafter"/>
</dbReference>
<dbReference type="CDD" id="cd10027">
    <property type="entry name" value="UDG-F1-like"/>
    <property type="match status" value="1"/>
</dbReference>
<dbReference type="Gene3D" id="3.40.470.10">
    <property type="entry name" value="Uracil-DNA glycosylase-like domain"/>
    <property type="match status" value="1"/>
</dbReference>
<dbReference type="HAMAP" id="MF_00148">
    <property type="entry name" value="UDG"/>
    <property type="match status" value="1"/>
</dbReference>
<dbReference type="InterPro" id="IPR002043">
    <property type="entry name" value="UDG_fam1"/>
</dbReference>
<dbReference type="InterPro" id="IPR018085">
    <property type="entry name" value="Ura-DNA_Glyclase_AS"/>
</dbReference>
<dbReference type="InterPro" id="IPR005122">
    <property type="entry name" value="Uracil-DNA_glycosylase-like"/>
</dbReference>
<dbReference type="InterPro" id="IPR036895">
    <property type="entry name" value="Uracil-DNA_glycosylase-like_sf"/>
</dbReference>
<dbReference type="NCBIfam" id="NF003588">
    <property type="entry name" value="PRK05254.1-1"/>
    <property type="match status" value="1"/>
</dbReference>
<dbReference type="NCBIfam" id="NF003589">
    <property type="entry name" value="PRK05254.1-2"/>
    <property type="match status" value="1"/>
</dbReference>
<dbReference type="NCBIfam" id="NF003591">
    <property type="entry name" value="PRK05254.1-4"/>
    <property type="match status" value="1"/>
</dbReference>
<dbReference type="NCBIfam" id="NF003592">
    <property type="entry name" value="PRK05254.1-5"/>
    <property type="match status" value="1"/>
</dbReference>
<dbReference type="NCBIfam" id="TIGR00628">
    <property type="entry name" value="ung"/>
    <property type="match status" value="1"/>
</dbReference>
<dbReference type="PANTHER" id="PTHR11264">
    <property type="entry name" value="URACIL-DNA GLYCOSYLASE"/>
    <property type="match status" value="1"/>
</dbReference>
<dbReference type="PANTHER" id="PTHR11264:SF0">
    <property type="entry name" value="URACIL-DNA GLYCOSYLASE"/>
    <property type="match status" value="1"/>
</dbReference>
<dbReference type="Pfam" id="PF03167">
    <property type="entry name" value="UDG"/>
    <property type="match status" value="1"/>
</dbReference>
<dbReference type="SMART" id="SM00986">
    <property type="entry name" value="UDG"/>
    <property type="match status" value="1"/>
</dbReference>
<dbReference type="SMART" id="SM00987">
    <property type="entry name" value="UreE_C"/>
    <property type="match status" value="1"/>
</dbReference>
<dbReference type="SUPFAM" id="SSF52141">
    <property type="entry name" value="Uracil-DNA glycosylase-like"/>
    <property type="match status" value="1"/>
</dbReference>
<dbReference type="PROSITE" id="PS00130">
    <property type="entry name" value="U_DNA_GLYCOSYLASE"/>
    <property type="match status" value="1"/>
</dbReference>
<reference key="1">
    <citation type="journal article" date="2006" name="J. Bacteriol.">
        <title>Comparison of the genome sequence of the poultry pathogen Bordetella avium with those of B. bronchiseptica, B. pertussis, and B. parapertussis reveals extensive diversity in surface structures associated with host interaction.</title>
        <authorList>
            <person name="Sebaihia M."/>
            <person name="Preston A."/>
            <person name="Maskell D.J."/>
            <person name="Kuzmiak H."/>
            <person name="Connell T.D."/>
            <person name="King N.D."/>
            <person name="Orndorff P.E."/>
            <person name="Miyamoto D.M."/>
            <person name="Thomson N.R."/>
            <person name="Harris D."/>
            <person name="Goble A."/>
            <person name="Lord A."/>
            <person name="Murphy L."/>
            <person name="Quail M.A."/>
            <person name="Rutter S."/>
            <person name="Squares R."/>
            <person name="Squares S."/>
            <person name="Woodward J."/>
            <person name="Parkhill J."/>
            <person name="Temple L.M."/>
        </authorList>
    </citation>
    <scope>NUCLEOTIDE SEQUENCE [LARGE SCALE GENOMIC DNA]</scope>
    <source>
        <strain>197N</strain>
    </source>
</reference>
<comment type="function">
    <text evidence="1">Excises uracil residues from the DNA which can arise as a result of misincorporation of dUMP residues by DNA polymerase or due to deamination of cytosine.</text>
</comment>
<comment type="catalytic activity">
    <reaction evidence="1">
        <text>Hydrolyzes single-stranded DNA or mismatched double-stranded DNA and polynucleotides, releasing free uracil.</text>
        <dbReference type="EC" id="3.2.2.27"/>
    </reaction>
</comment>
<comment type="subcellular location">
    <subcellularLocation>
        <location evidence="1">Cytoplasm</location>
    </subcellularLocation>
</comment>
<comment type="similarity">
    <text evidence="1">Belongs to the uracil-DNA glycosylase (UDG) superfamily. UNG family.</text>
</comment>
<gene>
    <name evidence="1" type="primary">ung</name>
    <name type="ordered locus">BAV0172</name>
</gene>
<protein>
    <recommendedName>
        <fullName evidence="1">Uracil-DNA glycosylase</fullName>
        <shortName evidence="1">UDG</shortName>
        <ecNumber evidence="1">3.2.2.27</ecNumber>
    </recommendedName>
</protein>
<sequence length="252" mass="26930">MAIDNRLLPNTLAAQAAALPSAWSQALAAPGVAQALDHIINHVEARLAAGATVYPATPLRALSSLAPSEVRVVILGQDPYHGPGQAQGLAFSVPDDCKCPPSLRNIFKEIGRDYALDGKPGHDLTPWVKQGVLLLNTALTVEDGQPASHAKRGWETVTDALFTQVAQDPTPKVFLLWGAHAQAKAALLPPGHAHLVLSANHPSPLSATRAPTPFIGCGHFRLTNEWLEKQGQTLIDWTATFKKIPAQAEFRL</sequence>
<organism>
    <name type="scientific">Bordetella avium (strain 197N)</name>
    <dbReference type="NCBI Taxonomy" id="360910"/>
    <lineage>
        <taxon>Bacteria</taxon>
        <taxon>Pseudomonadati</taxon>
        <taxon>Pseudomonadota</taxon>
        <taxon>Betaproteobacteria</taxon>
        <taxon>Burkholderiales</taxon>
        <taxon>Alcaligenaceae</taxon>
        <taxon>Bordetella</taxon>
    </lineage>
</organism>
<keyword id="KW-0963">Cytoplasm</keyword>
<keyword id="KW-0227">DNA damage</keyword>
<keyword id="KW-0234">DNA repair</keyword>
<keyword id="KW-0378">Hydrolase</keyword>
<keyword id="KW-1185">Reference proteome</keyword>
<name>UNG_BORA1</name>
<evidence type="ECO:0000255" key="1">
    <source>
        <dbReference type="HAMAP-Rule" id="MF_00148"/>
    </source>
</evidence>
<accession>Q2L0Y2</accession>
<proteinExistence type="inferred from homology"/>